<sequence length="425" mass="49881">MREPDFLNHFLKKGYFKKHAKAVLALSGGLDSMFLFKVLSTYQKELEIELILAHVNHKQRIESDWEEKELRKLAAEAELPIYISNFSGEFSEARARNFRYDFFQEVMKKTGATALVTAHHADDQVETIFMRLIRGTRLRYLSGIKEKQVVGEIEIIRPFLHFQKKDFPSIFHFEDTSNQENHYFRNRIRNSYLPELEKENPRFRDAILGIGNEILDYDLAIAELSNNINVEDLQQLFSYSESTQRVLLQTYLNRFPDLNLTKAQFAEVQQILKSKSQYRHPIKNGYELIKEYQQFQICKISPQADEEEDELVLHYQNQVAYQGYLFSFGLPLEGESIQQIPVSRETSIHIRHRKTGDVLIQNGHRKKLRRLFIDLKIPMEKRNSALIIEQFGEIVSILGIATNNLSKKTKNDIMNTVLYIEKIDR</sequence>
<gene>
    <name evidence="1" type="primary">tilS</name>
    <name type="ordered locus">SP70585_0011</name>
</gene>
<protein>
    <recommendedName>
        <fullName evidence="1">tRNA(Ile)-lysidine synthase</fullName>
        <ecNumber evidence="1">6.3.4.19</ecNumber>
    </recommendedName>
    <alternativeName>
        <fullName evidence="1">tRNA(Ile)-2-lysyl-cytidine synthase</fullName>
    </alternativeName>
    <alternativeName>
        <fullName evidence="1">tRNA(Ile)-lysidine synthetase</fullName>
    </alternativeName>
</protein>
<accession>C1C992</accession>
<keyword id="KW-0067">ATP-binding</keyword>
<keyword id="KW-0963">Cytoplasm</keyword>
<keyword id="KW-0436">Ligase</keyword>
<keyword id="KW-0547">Nucleotide-binding</keyword>
<keyword id="KW-0819">tRNA processing</keyword>
<feature type="chain" id="PRO_1000164334" description="tRNA(Ile)-lysidine synthase">
    <location>
        <begin position="1"/>
        <end position="425"/>
    </location>
</feature>
<feature type="binding site" evidence="1">
    <location>
        <begin position="27"/>
        <end position="32"/>
    </location>
    <ligand>
        <name>ATP</name>
        <dbReference type="ChEBI" id="CHEBI:30616"/>
    </ligand>
</feature>
<dbReference type="EC" id="6.3.4.19" evidence="1"/>
<dbReference type="EMBL" id="CP000918">
    <property type="protein sequence ID" value="ACO17785.1"/>
    <property type="molecule type" value="Genomic_DNA"/>
</dbReference>
<dbReference type="RefSeq" id="WP_001208978.1">
    <property type="nucleotide sequence ID" value="NC_012468.1"/>
</dbReference>
<dbReference type="SMR" id="C1C992"/>
<dbReference type="KEGG" id="snm:SP70585_0011"/>
<dbReference type="HOGENOM" id="CLU_018869_0_2_9"/>
<dbReference type="Proteomes" id="UP000002211">
    <property type="component" value="Chromosome"/>
</dbReference>
<dbReference type="GO" id="GO:0005737">
    <property type="term" value="C:cytoplasm"/>
    <property type="evidence" value="ECO:0007669"/>
    <property type="project" value="UniProtKB-SubCell"/>
</dbReference>
<dbReference type="GO" id="GO:0005524">
    <property type="term" value="F:ATP binding"/>
    <property type="evidence" value="ECO:0007669"/>
    <property type="project" value="UniProtKB-UniRule"/>
</dbReference>
<dbReference type="GO" id="GO:0032267">
    <property type="term" value="F:tRNA(Ile)-lysidine synthase activity"/>
    <property type="evidence" value="ECO:0007669"/>
    <property type="project" value="UniProtKB-EC"/>
</dbReference>
<dbReference type="GO" id="GO:0006400">
    <property type="term" value="P:tRNA modification"/>
    <property type="evidence" value="ECO:0007669"/>
    <property type="project" value="UniProtKB-UniRule"/>
</dbReference>
<dbReference type="CDD" id="cd01992">
    <property type="entry name" value="TilS_N"/>
    <property type="match status" value="1"/>
</dbReference>
<dbReference type="Gene3D" id="3.40.50.620">
    <property type="entry name" value="HUPs"/>
    <property type="match status" value="1"/>
</dbReference>
<dbReference type="HAMAP" id="MF_01161">
    <property type="entry name" value="tRNA_Ile_lys_synt"/>
    <property type="match status" value="1"/>
</dbReference>
<dbReference type="InterPro" id="IPR012796">
    <property type="entry name" value="Lysidine-tRNA-synth_C"/>
</dbReference>
<dbReference type="InterPro" id="IPR014729">
    <property type="entry name" value="Rossmann-like_a/b/a_fold"/>
</dbReference>
<dbReference type="InterPro" id="IPR011063">
    <property type="entry name" value="TilS/TtcA_N"/>
</dbReference>
<dbReference type="InterPro" id="IPR012094">
    <property type="entry name" value="tRNA_Ile_lys_synt"/>
</dbReference>
<dbReference type="InterPro" id="IPR012795">
    <property type="entry name" value="tRNA_Ile_lys_synt_N"/>
</dbReference>
<dbReference type="NCBIfam" id="TIGR02433">
    <property type="entry name" value="lysidine_TilS_C"/>
    <property type="match status" value="1"/>
</dbReference>
<dbReference type="NCBIfam" id="TIGR02432">
    <property type="entry name" value="lysidine_TilS_N"/>
    <property type="match status" value="1"/>
</dbReference>
<dbReference type="PANTHER" id="PTHR43033">
    <property type="entry name" value="TRNA(ILE)-LYSIDINE SYNTHASE-RELATED"/>
    <property type="match status" value="1"/>
</dbReference>
<dbReference type="PANTHER" id="PTHR43033:SF1">
    <property type="entry name" value="TRNA(ILE)-LYSIDINE SYNTHASE-RELATED"/>
    <property type="match status" value="1"/>
</dbReference>
<dbReference type="Pfam" id="PF01171">
    <property type="entry name" value="ATP_bind_3"/>
    <property type="match status" value="1"/>
</dbReference>
<dbReference type="Pfam" id="PF11734">
    <property type="entry name" value="TilS_C"/>
    <property type="match status" value="1"/>
</dbReference>
<dbReference type="SMART" id="SM00977">
    <property type="entry name" value="TilS_C"/>
    <property type="match status" value="1"/>
</dbReference>
<dbReference type="SUPFAM" id="SSF52402">
    <property type="entry name" value="Adenine nucleotide alpha hydrolases-like"/>
    <property type="match status" value="1"/>
</dbReference>
<dbReference type="SUPFAM" id="SSF56037">
    <property type="entry name" value="PheT/TilS domain"/>
    <property type="match status" value="1"/>
</dbReference>
<proteinExistence type="inferred from homology"/>
<organism>
    <name type="scientific">Streptococcus pneumoniae (strain 70585)</name>
    <dbReference type="NCBI Taxonomy" id="488221"/>
    <lineage>
        <taxon>Bacteria</taxon>
        <taxon>Bacillati</taxon>
        <taxon>Bacillota</taxon>
        <taxon>Bacilli</taxon>
        <taxon>Lactobacillales</taxon>
        <taxon>Streptococcaceae</taxon>
        <taxon>Streptococcus</taxon>
    </lineage>
</organism>
<comment type="function">
    <text evidence="1">Ligates lysine onto the cytidine present at position 34 of the AUA codon-specific tRNA(Ile) that contains the anticodon CAU, in an ATP-dependent manner. Cytidine is converted to lysidine, thus changing the amino acid specificity of the tRNA from methionine to isoleucine.</text>
</comment>
<comment type="catalytic activity">
    <reaction evidence="1">
        <text>cytidine(34) in tRNA(Ile2) + L-lysine + ATP = lysidine(34) in tRNA(Ile2) + AMP + diphosphate + H(+)</text>
        <dbReference type="Rhea" id="RHEA:43744"/>
        <dbReference type="Rhea" id="RHEA-COMP:10625"/>
        <dbReference type="Rhea" id="RHEA-COMP:10670"/>
        <dbReference type="ChEBI" id="CHEBI:15378"/>
        <dbReference type="ChEBI" id="CHEBI:30616"/>
        <dbReference type="ChEBI" id="CHEBI:32551"/>
        <dbReference type="ChEBI" id="CHEBI:33019"/>
        <dbReference type="ChEBI" id="CHEBI:82748"/>
        <dbReference type="ChEBI" id="CHEBI:83665"/>
        <dbReference type="ChEBI" id="CHEBI:456215"/>
        <dbReference type="EC" id="6.3.4.19"/>
    </reaction>
</comment>
<comment type="subcellular location">
    <subcellularLocation>
        <location evidence="1">Cytoplasm</location>
    </subcellularLocation>
</comment>
<comment type="domain">
    <text>The N-terminal region contains the highly conserved SGGXDS motif, predicted to be a P-loop motif involved in ATP binding.</text>
</comment>
<comment type="similarity">
    <text evidence="1">Belongs to the tRNA(Ile)-lysidine synthase family.</text>
</comment>
<name>TILS_STRP7</name>
<evidence type="ECO:0000255" key="1">
    <source>
        <dbReference type="HAMAP-Rule" id="MF_01161"/>
    </source>
</evidence>
<reference key="1">
    <citation type="journal article" date="2010" name="Genome Biol.">
        <title>Structure and dynamics of the pan-genome of Streptococcus pneumoniae and closely related species.</title>
        <authorList>
            <person name="Donati C."/>
            <person name="Hiller N.L."/>
            <person name="Tettelin H."/>
            <person name="Muzzi A."/>
            <person name="Croucher N.J."/>
            <person name="Angiuoli S.V."/>
            <person name="Oggioni M."/>
            <person name="Dunning Hotopp J.C."/>
            <person name="Hu F.Z."/>
            <person name="Riley D.R."/>
            <person name="Covacci A."/>
            <person name="Mitchell T.J."/>
            <person name="Bentley S.D."/>
            <person name="Kilian M."/>
            <person name="Ehrlich G.D."/>
            <person name="Rappuoli R."/>
            <person name="Moxon E.R."/>
            <person name="Masignani V."/>
        </authorList>
    </citation>
    <scope>NUCLEOTIDE SEQUENCE [LARGE SCALE GENOMIC DNA]</scope>
    <source>
        <strain>70585</strain>
    </source>
</reference>